<reference key="1">
    <citation type="journal article" date="2007" name="PLoS ONE">
        <title>The complete genome sequence and analysis of the Epsilonproteobacterium Arcobacter butzleri.</title>
        <authorList>
            <person name="Miller W.G."/>
            <person name="Parker C.T."/>
            <person name="Rubenfield M."/>
            <person name="Mendz G.L."/>
            <person name="Woesten M.M.S.M."/>
            <person name="Ussery D.W."/>
            <person name="Stolz J.F."/>
            <person name="Binnewies T.T."/>
            <person name="Hallin P.F."/>
            <person name="Wang G."/>
            <person name="Malek J.A."/>
            <person name="Rogosin A."/>
            <person name="Stanker L.H."/>
            <person name="Mandrell R.E."/>
        </authorList>
    </citation>
    <scope>NUCLEOTIDE SEQUENCE [LARGE SCALE GENOMIC DNA]</scope>
    <source>
        <strain>RM4018</strain>
    </source>
</reference>
<feature type="chain" id="PRO_1000066548" description="Acyl carrier protein">
    <location>
        <begin position="1"/>
        <end position="76"/>
    </location>
</feature>
<feature type="domain" description="Carrier" evidence="2">
    <location>
        <begin position="1"/>
        <end position="76"/>
    </location>
</feature>
<feature type="modified residue" description="O-(pantetheine 4'-phosphoryl)serine" evidence="2">
    <location>
        <position position="36"/>
    </location>
</feature>
<gene>
    <name evidence="1" type="primary">acpP</name>
    <name type="ordered locus">Abu_2057</name>
</gene>
<protein>
    <recommendedName>
        <fullName evidence="1">Acyl carrier protein</fullName>
        <shortName evidence="1">ACP</shortName>
    </recommendedName>
</protein>
<evidence type="ECO:0000255" key="1">
    <source>
        <dbReference type="HAMAP-Rule" id="MF_01217"/>
    </source>
</evidence>
<evidence type="ECO:0000255" key="2">
    <source>
        <dbReference type="PROSITE-ProRule" id="PRU00258"/>
    </source>
</evidence>
<name>ACP_ALIB4</name>
<dbReference type="EMBL" id="CP000361">
    <property type="protein sequence ID" value="ABV68274.1"/>
    <property type="molecule type" value="Genomic_DNA"/>
</dbReference>
<dbReference type="RefSeq" id="WP_004510944.1">
    <property type="nucleotide sequence ID" value="NC_009850.1"/>
</dbReference>
<dbReference type="SMR" id="A8EWF1"/>
<dbReference type="STRING" id="367737.Abu_2057"/>
<dbReference type="GeneID" id="24305289"/>
<dbReference type="KEGG" id="abu:Abu_2057"/>
<dbReference type="eggNOG" id="COG0236">
    <property type="taxonomic scope" value="Bacteria"/>
</dbReference>
<dbReference type="HOGENOM" id="CLU_108696_5_1_7"/>
<dbReference type="UniPathway" id="UPA00094"/>
<dbReference type="Proteomes" id="UP000001136">
    <property type="component" value="Chromosome"/>
</dbReference>
<dbReference type="GO" id="GO:0005829">
    <property type="term" value="C:cytosol"/>
    <property type="evidence" value="ECO:0007669"/>
    <property type="project" value="TreeGrafter"/>
</dbReference>
<dbReference type="GO" id="GO:0016020">
    <property type="term" value="C:membrane"/>
    <property type="evidence" value="ECO:0007669"/>
    <property type="project" value="GOC"/>
</dbReference>
<dbReference type="GO" id="GO:0000035">
    <property type="term" value="F:acyl binding"/>
    <property type="evidence" value="ECO:0007669"/>
    <property type="project" value="TreeGrafter"/>
</dbReference>
<dbReference type="GO" id="GO:0000036">
    <property type="term" value="F:acyl carrier activity"/>
    <property type="evidence" value="ECO:0007669"/>
    <property type="project" value="UniProtKB-UniRule"/>
</dbReference>
<dbReference type="GO" id="GO:0009245">
    <property type="term" value="P:lipid A biosynthetic process"/>
    <property type="evidence" value="ECO:0007669"/>
    <property type="project" value="TreeGrafter"/>
</dbReference>
<dbReference type="FunFam" id="1.10.1200.10:FF:000003">
    <property type="entry name" value="Acyl carrier protein"/>
    <property type="match status" value="1"/>
</dbReference>
<dbReference type="Gene3D" id="1.10.1200.10">
    <property type="entry name" value="ACP-like"/>
    <property type="match status" value="1"/>
</dbReference>
<dbReference type="HAMAP" id="MF_01217">
    <property type="entry name" value="Acyl_carrier"/>
    <property type="match status" value="1"/>
</dbReference>
<dbReference type="InterPro" id="IPR003231">
    <property type="entry name" value="ACP"/>
</dbReference>
<dbReference type="InterPro" id="IPR036736">
    <property type="entry name" value="ACP-like_sf"/>
</dbReference>
<dbReference type="InterPro" id="IPR009081">
    <property type="entry name" value="PP-bd_ACP"/>
</dbReference>
<dbReference type="InterPro" id="IPR006162">
    <property type="entry name" value="Ppantetheine_attach_site"/>
</dbReference>
<dbReference type="NCBIfam" id="TIGR00517">
    <property type="entry name" value="acyl_carrier"/>
    <property type="match status" value="1"/>
</dbReference>
<dbReference type="NCBIfam" id="NF002148">
    <property type="entry name" value="PRK00982.1-2"/>
    <property type="match status" value="1"/>
</dbReference>
<dbReference type="NCBIfam" id="NF002149">
    <property type="entry name" value="PRK00982.1-3"/>
    <property type="match status" value="1"/>
</dbReference>
<dbReference type="NCBIfam" id="NF002150">
    <property type="entry name" value="PRK00982.1-4"/>
    <property type="match status" value="1"/>
</dbReference>
<dbReference type="NCBIfam" id="NF002151">
    <property type="entry name" value="PRK00982.1-5"/>
    <property type="match status" value="1"/>
</dbReference>
<dbReference type="PANTHER" id="PTHR20863">
    <property type="entry name" value="ACYL CARRIER PROTEIN"/>
    <property type="match status" value="1"/>
</dbReference>
<dbReference type="PANTHER" id="PTHR20863:SF76">
    <property type="entry name" value="CARRIER DOMAIN-CONTAINING PROTEIN"/>
    <property type="match status" value="1"/>
</dbReference>
<dbReference type="Pfam" id="PF00550">
    <property type="entry name" value="PP-binding"/>
    <property type="match status" value="1"/>
</dbReference>
<dbReference type="SUPFAM" id="SSF47336">
    <property type="entry name" value="ACP-like"/>
    <property type="match status" value="1"/>
</dbReference>
<dbReference type="PROSITE" id="PS50075">
    <property type="entry name" value="CARRIER"/>
    <property type="match status" value="1"/>
</dbReference>
<dbReference type="PROSITE" id="PS00012">
    <property type="entry name" value="PHOSPHOPANTETHEINE"/>
    <property type="match status" value="1"/>
</dbReference>
<proteinExistence type="inferred from homology"/>
<comment type="function">
    <text evidence="1">Carrier of the growing fatty acid chain in fatty acid biosynthesis.</text>
</comment>
<comment type="pathway">
    <text evidence="1">Lipid metabolism; fatty acid biosynthesis.</text>
</comment>
<comment type="subcellular location">
    <subcellularLocation>
        <location evidence="1">Cytoplasm</location>
    </subcellularLocation>
</comment>
<comment type="PTM">
    <text evidence="1">4'-phosphopantetheine is transferred from CoA to a specific serine of apo-ACP by AcpS. This modification is essential for activity because fatty acids are bound in thioester linkage to the sulfhydryl of the prosthetic group.</text>
</comment>
<comment type="similarity">
    <text evidence="1">Belongs to the acyl carrier protein (ACP) family.</text>
</comment>
<sequence length="76" mass="8410">MALLDDVKAVVVEQLDCDPAEVKEDSKFIEDLGADSLDVVELVMALEEKFDIEIPDEDAEKILTVADAIKYIENNA</sequence>
<accession>A8EWF1</accession>
<keyword id="KW-0963">Cytoplasm</keyword>
<keyword id="KW-0275">Fatty acid biosynthesis</keyword>
<keyword id="KW-0276">Fatty acid metabolism</keyword>
<keyword id="KW-0444">Lipid biosynthesis</keyword>
<keyword id="KW-0443">Lipid metabolism</keyword>
<keyword id="KW-0596">Phosphopantetheine</keyword>
<keyword id="KW-0597">Phosphoprotein</keyword>
<keyword id="KW-1185">Reference proteome</keyword>
<organism>
    <name type="scientific">Aliarcobacter butzleri (strain RM4018)</name>
    <name type="common">Arcobacter butzleri</name>
    <dbReference type="NCBI Taxonomy" id="367737"/>
    <lineage>
        <taxon>Bacteria</taxon>
        <taxon>Pseudomonadati</taxon>
        <taxon>Campylobacterota</taxon>
        <taxon>Epsilonproteobacteria</taxon>
        <taxon>Campylobacterales</taxon>
        <taxon>Arcobacteraceae</taxon>
        <taxon>Aliarcobacter</taxon>
    </lineage>
</organism>